<protein>
    <recommendedName>
        <fullName>Large ribosomal subunit protein eL36</fullName>
    </recommendedName>
    <alternativeName>
        <fullName>60S ribosomal protein L36</fullName>
    </alternativeName>
</protein>
<name>RL36_RABIT</name>
<gene>
    <name type="primary">RPL36</name>
</gene>
<proteinExistence type="evidence at protein level"/>
<keyword id="KW-0002">3D-structure</keyword>
<keyword id="KW-0007">Acetylation</keyword>
<keyword id="KW-0963">Cytoplasm</keyword>
<keyword id="KW-1185">Reference proteome</keyword>
<keyword id="KW-0687">Ribonucleoprotein</keyword>
<keyword id="KW-0689">Ribosomal protein</keyword>
<sequence>MALRYPMAVGLNKGHKVTKNVSKPRHSRRRRRLTKHTKFVRDMIREVCGFAPYERRAMELLKVSKDKRALKFIKKRVGTHIRAKRKREELSSVLAAMRKAAAKKD</sequence>
<accession>G1TTQ5</accession>
<reference key="1">
    <citation type="journal article" date="2011" name="Nature">
        <title>A high-resolution map of human evolutionary constraint using 29 mammals.</title>
        <authorList>
            <person name="Lindblad-Toh K."/>
            <person name="Garber M."/>
            <person name="Zuk O."/>
            <person name="Lin M.F."/>
            <person name="Parker B.J."/>
            <person name="Washietl S."/>
            <person name="Kheradpour P."/>
            <person name="Ernst J."/>
            <person name="Jordan G."/>
            <person name="Mauceli E."/>
            <person name="Ward L.D."/>
            <person name="Lowe C.B."/>
            <person name="Holloway A.K."/>
            <person name="Clamp M."/>
            <person name="Gnerre S."/>
            <person name="Alfoldi J."/>
            <person name="Beal K."/>
            <person name="Chang J."/>
            <person name="Clawson H."/>
            <person name="Cuff J."/>
            <person name="Di Palma F."/>
            <person name="Fitzgerald S."/>
            <person name="Flicek P."/>
            <person name="Guttman M."/>
            <person name="Hubisz M.J."/>
            <person name="Jaffe D.B."/>
            <person name="Jungreis I."/>
            <person name="Kent W.J."/>
            <person name="Kostka D."/>
            <person name="Lara M."/>
            <person name="Martins A.L."/>
            <person name="Massingham T."/>
            <person name="Moltke I."/>
            <person name="Raney B.J."/>
            <person name="Rasmussen M.D."/>
            <person name="Robinson J."/>
            <person name="Stark A."/>
            <person name="Vilella A.J."/>
            <person name="Wen J."/>
            <person name="Xie X."/>
            <person name="Zody M.C."/>
            <person name="Baldwin J."/>
            <person name="Bloom T."/>
            <person name="Chin C.W."/>
            <person name="Heiman D."/>
            <person name="Nicol R."/>
            <person name="Nusbaum C."/>
            <person name="Young S."/>
            <person name="Wilkinson J."/>
            <person name="Worley K.C."/>
            <person name="Kovar C.L."/>
            <person name="Muzny D.M."/>
            <person name="Gibbs R.A."/>
            <person name="Cree A."/>
            <person name="Dihn H.H."/>
            <person name="Fowler G."/>
            <person name="Jhangiani S."/>
            <person name="Joshi V."/>
            <person name="Lee S."/>
            <person name="Lewis L.R."/>
            <person name="Nazareth L.V."/>
            <person name="Okwuonu G."/>
            <person name="Santibanez J."/>
            <person name="Warren W.C."/>
            <person name="Mardis E.R."/>
            <person name="Weinstock G.M."/>
            <person name="Wilson R.K."/>
            <person name="Delehaunty K."/>
            <person name="Dooling D."/>
            <person name="Fronik C."/>
            <person name="Fulton L."/>
            <person name="Fulton B."/>
            <person name="Graves T."/>
            <person name="Minx P."/>
            <person name="Sodergren E."/>
            <person name="Birney E."/>
            <person name="Margulies E.H."/>
            <person name="Herrero J."/>
            <person name="Green E.D."/>
            <person name="Haussler D."/>
            <person name="Siepel A."/>
            <person name="Goldman N."/>
            <person name="Pollard K.S."/>
            <person name="Pedersen J.S."/>
            <person name="Lander E.S."/>
            <person name="Kellis M."/>
        </authorList>
    </citation>
    <scope>NUCLEOTIDE SEQUENCE [LARGE SCALE GENOMIC DNA]</scope>
    <source>
        <strain>Thorbecke</strain>
    </source>
</reference>
<reference evidence="15 16" key="2">
    <citation type="journal article" date="2015" name="Nature">
        <title>Structural basis for stop codon recognition in eukaryotes.</title>
        <authorList>
            <person name="Brown A."/>
            <person name="Shao S."/>
            <person name="Murray J."/>
            <person name="Hegde R.S."/>
            <person name="Ramakrishnan V."/>
        </authorList>
    </citation>
    <scope>STRUCTURE BY ELECTRON MICROSCOPY (3.45 ANGSTROMS) OF RIBOSOME</scope>
    <scope>FUNCTION</scope>
    <scope>SUBCELLULAR LOCATION</scope>
    <scope>SUBUNIT</scope>
</reference>
<reference evidence="17 18" key="3">
    <citation type="journal article" date="2016" name="Cell">
        <title>Decoding mammalian ribosome-mRNA states by translational GTPase complexes.</title>
        <authorList>
            <person name="Shao S."/>
            <person name="Murray J."/>
            <person name="Brown A."/>
            <person name="Taunton J."/>
            <person name="Ramakrishnan V."/>
            <person name="Hegde R.S."/>
        </authorList>
    </citation>
    <scope>STRUCTURE BY ELECTRON MICROSCOPY (3.31 ANGSTROMS) OF RIBOSOME</scope>
    <scope>FUNCTION</scope>
    <scope>SUBCELLULAR LOCATION</scope>
    <scope>SUBUNIT</scope>
</reference>
<reference evidence="19 20" key="4">
    <citation type="journal article" date="2018" name="Elife">
        <title>Dual tRNA mimicry in the Cricket paralysis virus IRES uncovers an unexpected similarity with the Hepatitis C Virus IRES.</title>
        <authorList>
            <person name="Pisareva V.P."/>
            <person name="Pisarev A.V."/>
            <person name="Fernandez I.S."/>
        </authorList>
    </citation>
    <scope>STRUCTURE BY ELECTRON MICROSCOPY (3.20 ANGSTROMS) OF RIBOSOME</scope>
    <scope>SUBCELLULAR LOCATION</scope>
    <scope>SUBUNIT</scope>
</reference>
<reference evidence="22 23" key="5">
    <citation type="journal article" date="2018" name="Elife">
        <title>Structures of translationally inactive mammalian ribosomes.</title>
        <authorList>
            <person name="Brown A."/>
            <person name="Baird M.R."/>
            <person name="Yip M.C."/>
            <person name="Murray J."/>
            <person name="Shao S."/>
        </authorList>
    </citation>
    <scope>STRUCTURE BY ELECTRON MICROSCOPY (3.30 ANGSTROMS) OF 1-107 OF RIBOSOME</scope>
    <scope>SUBCELLULAR LOCATION</scope>
    <scope>SUBUNIT</scope>
</reference>
<reference evidence="21" key="6">
    <citation type="journal article" date="2018" name="Mol. Cell">
        <title>ZNF598 is a quality control sensor of collided ribosomes.</title>
        <authorList>
            <person name="Juszkiewicz S."/>
            <person name="Chandrasekaran V."/>
            <person name="Lin Z."/>
            <person name="Kraatz S."/>
            <person name="Ramakrishnan V."/>
            <person name="Hegde R.S."/>
        </authorList>
    </citation>
    <scope>STRUCTURE BY ELECTRON MICROSCOPY (3.80 ANGSTROMS) OF RIBOSOME</scope>
    <scope>SUBCELLULAR LOCATION</scope>
    <scope>SUBUNIT</scope>
</reference>
<reference evidence="26 27" key="7">
    <citation type="journal article" date="2019" name="Elife">
        <title>Structural and mutational analysis of the ribosome-arresting human XBP1u.</title>
        <authorList>
            <person name="Shanmuganathan V."/>
            <person name="Schiller N."/>
            <person name="Magoulopoulou A."/>
            <person name="Cheng J."/>
            <person name="Braunger K."/>
            <person name="Cymer F."/>
            <person name="Berninghausen O."/>
            <person name="Beatrix B."/>
            <person name="Kohno K."/>
            <person name="von Heijne G."/>
            <person name="Beckmann R."/>
        </authorList>
    </citation>
    <scope>STRUCTURE BY ELECTRON MICROSCOPY (3.00 ANGSTROMS) OF RIBOSOME</scope>
    <scope>SUBCELLULAR LOCATION</scope>
    <scope>SUBUNIT</scope>
</reference>
<reference evidence="24 25" key="8">
    <citation type="journal article" date="2019" name="EMBO J.">
        <title>The Israeli acute paralysis virus IRES captures host ribosomes by mimicking a ribosomal state with hybrid tRNAs.</title>
        <authorList>
            <person name="Acosta-Reyes F."/>
            <person name="Neupane R."/>
            <person name="Frank J."/>
            <person name="Fernandez I.S."/>
        </authorList>
    </citation>
    <scope>STRUCTURE BY ELECTRON MICROSCOPY (3.10 ANGSTROMS) OF RIBOSOME</scope>
    <scope>SUBUNIT</scope>
    <scope>SUBCELLULAR LOCATION</scope>
</reference>
<reference evidence="28" key="9">
    <citation type="journal article" date="2019" name="Nat. Struct. Mol. Biol.">
        <title>Mechanism of ribosome stalling during translation of a poly(A) tail.</title>
        <authorList>
            <person name="Chandrasekaran V."/>
            <person name="Juszkiewicz S."/>
            <person name="Choi J."/>
            <person name="Puglisi J.D."/>
            <person name="Brown A."/>
            <person name="Shao S."/>
            <person name="Ramakrishnan V."/>
            <person name="Hegde R.S."/>
        </authorList>
    </citation>
    <scope>STRUCTURE BY ELECTRON MICROSCOPY (2.80 ANGSTROMS) OF RIBOSOME</scope>
    <scope>SUBCELLULAR LOCATION</scope>
    <scope>SUBUNIT</scope>
</reference>
<reference evidence="29 30" key="10">
    <citation type="journal article" date="2020" name="Cell Rep.">
        <title>The Halastavi arva virus intergenic region IRES promotes translation by the simplest possible initiation mechanism.</title>
        <authorList>
            <person name="Abaeva I.S."/>
            <person name="Vicens Q."/>
            <person name="Bochler A."/>
            <person name="Soufari H."/>
            <person name="Simonetti A."/>
            <person name="Pestova T.V."/>
            <person name="Hashem Y."/>
            <person name="Hellen C.U.T."/>
        </authorList>
    </citation>
    <scope>STRUCTURE BY ELECTRON MICROSCOPY (3.49 ANGSTROMS) OF RIBOSOME</scope>
    <scope>SUBCELLULAR LOCATION</scope>
    <scope>SUBUNIT</scope>
</reference>
<reference evidence="32 33" key="11">
    <citation type="journal article" date="2022" name="Mol. Cell">
        <title>Direct epitranscriptomic regulation of mammalian translation initiation through N4-acetylcytidine.</title>
        <authorList>
            <person name="Arango D."/>
            <person name="Sturgill D."/>
            <person name="Yang R."/>
            <person name="Kanai T."/>
            <person name="Bauer P."/>
            <person name="Roy J."/>
            <person name="Wang Z."/>
            <person name="Hosogane M."/>
            <person name="Schiffers S."/>
            <person name="Oberdoerffer S."/>
        </authorList>
    </citation>
    <scope>STRUCTURE BY ELECTRON MICROSCOPY (2.80 ANGSTROMS) OF RIBOSOME</scope>
    <scope>SUBCELLULAR LOCATION</scope>
    <scope>SUBUNIT</scope>
</reference>
<reference evidence="31" key="12">
    <citation type="journal article" date="2023" name="Nature">
        <title>A molecular network of conserved factors keeps ribosomes dormant in the egg.</title>
        <authorList>
            <person name="Leesch F."/>
            <person name="Lorenzo-Orts L."/>
            <person name="Pribitzer C."/>
            <person name="Grishkovskaya I."/>
            <person name="Roehsner J."/>
            <person name="Chugunova A."/>
            <person name="Matzinger M."/>
            <person name="Roitinger E."/>
            <person name="Belacic K."/>
            <person name="Kandolf S."/>
            <person name="Lin T.Y."/>
            <person name="Mechtler K."/>
            <person name="Meinhart A."/>
            <person name="Haselbach D."/>
            <person name="Pauli A."/>
        </authorList>
    </citation>
    <scope>STRUCTURE BY ELECTRON MICROSCOPY (2.30 ANGSTROMS) OF RIBOSOME</scope>
    <scope>SUBCELLULAR LOCATION</scope>
    <scope>SUBUNIT</scope>
</reference>
<organism>
    <name type="scientific">Oryctolagus cuniculus</name>
    <name type="common">Rabbit</name>
    <dbReference type="NCBI Taxonomy" id="9986"/>
    <lineage>
        <taxon>Eukaryota</taxon>
        <taxon>Metazoa</taxon>
        <taxon>Chordata</taxon>
        <taxon>Craniata</taxon>
        <taxon>Vertebrata</taxon>
        <taxon>Euteleostomi</taxon>
        <taxon>Mammalia</taxon>
        <taxon>Eutheria</taxon>
        <taxon>Euarchontoglires</taxon>
        <taxon>Glires</taxon>
        <taxon>Lagomorpha</taxon>
        <taxon>Leporidae</taxon>
        <taxon>Oryctolagus</taxon>
    </lineage>
</organism>
<dbReference type="EMBL" id="AAGW02008405">
    <property type="status" value="NOT_ANNOTATED_CDS"/>
    <property type="molecule type" value="Genomic_DNA"/>
</dbReference>
<dbReference type="PDB" id="3JAG">
    <property type="method" value="EM"/>
    <property type="resolution" value="3.65 A"/>
    <property type="chains" value="i=32-103"/>
</dbReference>
<dbReference type="PDB" id="3JAH">
    <property type="method" value="EM"/>
    <property type="resolution" value="3.45 A"/>
    <property type="chains" value="i=32-103"/>
</dbReference>
<dbReference type="PDB" id="3JAI">
    <property type="method" value="EM"/>
    <property type="resolution" value="3.65 A"/>
    <property type="chains" value="i=32-103"/>
</dbReference>
<dbReference type="PDB" id="5LZS">
    <property type="method" value="EM"/>
    <property type="resolution" value="3.31 A"/>
    <property type="chains" value="i=32-105"/>
</dbReference>
<dbReference type="PDB" id="5LZT">
    <property type="method" value="EM"/>
    <property type="resolution" value="3.65 A"/>
    <property type="chains" value="i=32-105"/>
</dbReference>
<dbReference type="PDB" id="5LZU">
    <property type="method" value="EM"/>
    <property type="resolution" value="3.75 A"/>
    <property type="chains" value="i=32-105"/>
</dbReference>
<dbReference type="PDB" id="5LZV">
    <property type="method" value="EM"/>
    <property type="resolution" value="3.35 A"/>
    <property type="chains" value="i=32-105"/>
</dbReference>
<dbReference type="PDB" id="5LZW">
    <property type="method" value="EM"/>
    <property type="resolution" value="3.53 A"/>
    <property type="chains" value="i=32-105"/>
</dbReference>
<dbReference type="PDB" id="5LZX">
    <property type="method" value="EM"/>
    <property type="resolution" value="3.67 A"/>
    <property type="chains" value="i=32-105"/>
</dbReference>
<dbReference type="PDB" id="5LZY">
    <property type="method" value="EM"/>
    <property type="resolution" value="3.99 A"/>
    <property type="chains" value="i=32-105"/>
</dbReference>
<dbReference type="PDB" id="5LZZ">
    <property type="method" value="EM"/>
    <property type="resolution" value="3.47 A"/>
    <property type="chains" value="i=32-105"/>
</dbReference>
<dbReference type="PDB" id="6D90">
    <property type="method" value="EM"/>
    <property type="resolution" value="3.20 A"/>
    <property type="chains" value="i=32-105"/>
</dbReference>
<dbReference type="PDB" id="6D9J">
    <property type="method" value="EM"/>
    <property type="resolution" value="3.20 A"/>
    <property type="chains" value="i=32-105"/>
</dbReference>
<dbReference type="PDB" id="6FTG">
    <property type="method" value="EM"/>
    <property type="resolution" value="9.10 A"/>
    <property type="chains" value="i=32-103"/>
</dbReference>
<dbReference type="PDB" id="6FTI">
    <property type="method" value="EM"/>
    <property type="resolution" value="4.20 A"/>
    <property type="chains" value="i=32-103"/>
</dbReference>
<dbReference type="PDB" id="6FTJ">
    <property type="method" value="EM"/>
    <property type="resolution" value="4.70 A"/>
    <property type="chains" value="i=32-103"/>
</dbReference>
<dbReference type="PDB" id="6HCF">
    <property type="method" value="EM"/>
    <property type="resolution" value="3.90 A"/>
    <property type="chains" value="i3=32-105"/>
</dbReference>
<dbReference type="PDB" id="6HCJ">
    <property type="method" value="EM"/>
    <property type="resolution" value="3.80 A"/>
    <property type="chains" value="i3=32-105"/>
</dbReference>
<dbReference type="PDB" id="6HCM">
    <property type="method" value="EM"/>
    <property type="resolution" value="6.80 A"/>
    <property type="chains" value="i3=32-105"/>
</dbReference>
<dbReference type="PDB" id="6HCQ">
    <property type="method" value="EM"/>
    <property type="resolution" value="6.50 A"/>
    <property type="chains" value="i3=32-105"/>
</dbReference>
<dbReference type="PDB" id="6MTB">
    <property type="method" value="EM"/>
    <property type="resolution" value="3.60 A"/>
    <property type="chains" value="i=32-103"/>
</dbReference>
<dbReference type="PDB" id="6MTC">
    <property type="method" value="EM"/>
    <property type="resolution" value="3.40 A"/>
    <property type="chains" value="i=32-103"/>
</dbReference>
<dbReference type="PDB" id="6MTD">
    <property type="method" value="EM"/>
    <property type="resolution" value="3.30 A"/>
    <property type="chains" value="i=32-103"/>
</dbReference>
<dbReference type="PDB" id="6MTE">
    <property type="method" value="EM"/>
    <property type="resolution" value="3.40 A"/>
    <property type="chains" value="i=32-103"/>
</dbReference>
<dbReference type="PDB" id="6P5I">
    <property type="method" value="EM"/>
    <property type="resolution" value="3.10 A"/>
    <property type="chains" value="Ai=32-105"/>
</dbReference>
<dbReference type="PDB" id="6P5J">
    <property type="method" value="EM"/>
    <property type="resolution" value="3.10 A"/>
    <property type="chains" value="Ai=32-105"/>
</dbReference>
<dbReference type="PDB" id="6P5K">
    <property type="method" value="EM"/>
    <property type="resolution" value="3.10 A"/>
    <property type="chains" value="Ai=32-105"/>
</dbReference>
<dbReference type="PDB" id="6P5N">
    <property type="method" value="EM"/>
    <property type="resolution" value="3.20 A"/>
    <property type="chains" value="Ai=32-105"/>
</dbReference>
<dbReference type="PDB" id="6R5Q">
    <property type="method" value="EM"/>
    <property type="resolution" value="3.00 A"/>
    <property type="chains" value="i=32-103"/>
</dbReference>
<dbReference type="PDB" id="6R6G">
    <property type="method" value="EM"/>
    <property type="resolution" value="3.70 A"/>
    <property type="chains" value="i=32-103"/>
</dbReference>
<dbReference type="PDB" id="6R6P">
    <property type="method" value="EM"/>
    <property type="resolution" value="3.10 A"/>
    <property type="chains" value="i=32-103"/>
</dbReference>
<dbReference type="PDB" id="6R7Q">
    <property type="method" value="EM"/>
    <property type="resolution" value="3.90 A"/>
    <property type="chains" value="i=32-103"/>
</dbReference>
<dbReference type="PDB" id="6SGC">
    <property type="method" value="EM"/>
    <property type="resolution" value="2.80 A"/>
    <property type="chains" value="i2=32-105"/>
</dbReference>
<dbReference type="PDB" id="6T59">
    <property type="method" value="EM"/>
    <property type="resolution" value="3.11 A"/>
    <property type="chains" value="i3=32-105"/>
</dbReference>
<dbReference type="PDB" id="6ZVK">
    <property type="method" value="EM"/>
    <property type="resolution" value="3.49 A"/>
    <property type="chains" value="B2=32-103"/>
</dbReference>
<dbReference type="PDB" id="7A01">
    <property type="method" value="EM"/>
    <property type="resolution" value="3.60 A"/>
    <property type="chains" value="B2=32-103"/>
</dbReference>
<dbReference type="PDB" id="7MDZ">
    <property type="method" value="EM"/>
    <property type="resolution" value="3.20 A"/>
    <property type="chains" value="i=32-105"/>
</dbReference>
<dbReference type="PDB" id="7O7Y">
    <property type="method" value="EM"/>
    <property type="resolution" value="2.20 A"/>
    <property type="chains" value="Bi=32-105"/>
</dbReference>
<dbReference type="PDB" id="7O7Z">
    <property type="method" value="EM"/>
    <property type="resolution" value="2.40 A"/>
    <property type="chains" value="Bi=32-105"/>
</dbReference>
<dbReference type="PDB" id="7O80">
    <property type="method" value="EM"/>
    <property type="resolution" value="2.90 A"/>
    <property type="chains" value="Bi=32-105"/>
</dbReference>
<dbReference type="PDB" id="7O81">
    <property type="method" value="EM"/>
    <property type="resolution" value="3.10 A"/>
    <property type="chains" value="Bi=32-105"/>
</dbReference>
<dbReference type="PDB" id="7OBR">
    <property type="method" value="EM"/>
    <property type="resolution" value="2.80 A"/>
    <property type="chains" value="i=32-103"/>
</dbReference>
<dbReference type="PDB" id="7OYD">
    <property type="method" value="EM"/>
    <property type="resolution" value="2.30 A"/>
    <property type="chains" value="i=32-105"/>
</dbReference>
<dbReference type="PDB" id="7QWQ">
    <property type="method" value="EM"/>
    <property type="resolution" value="2.83 A"/>
    <property type="chains" value="i=32-103"/>
</dbReference>
<dbReference type="PDB" id="7QWR">
    <property type="method" value="EM"/>
    <property type="resolution" value="2.90 A"/>
    <property type="chains" value="i=32-103"/>
</dbReference>
<dbReference type="PDB" id="7QWS">
    <property type="method" value="EM"/>
    <property type="resolution" value="3.40 A"/>
    <property type="chains" value="i=32-103"/>
</dbReference>
<dbReference type="PDB" id="7TM3">
    <property type="method" value="EM"/>
    <property type="resolution" value="3.25 A"/>
    <property type="chains" value="i=32-105"/>
</dbReference>
<dbReference type="PDB" id="7TOQ">
    <property type="method" value="EM"/>
    <property type="resolution" value="3.10 A"/>
    <property type="chains" value="AL36=32-103"/>
</dbReference>
<dbReference type="PDB" id="7TOR">
    <property type="method" value="EM"/>
    <property type="resolution" value="2.90 A"/>
    <property type="chains" value="AL36=32-103"/>
</dbReference>
<dbReference type="PDB" id="7TUT">
    <property type="method" value="EM"/>
    <property type="resolution" value="3.88 A"/>
    <property type="chains" value="i=32-105"/>
</dbReference>
<dbReference type="PDB" id="7UCJ">
    <property type="method" value="EM"/>
    <property type="resolution" value="3.10 A"/>
    <property type="chains" value="i=32-103"/>
</dbReference>
<dbReference type="PDB" id="7UCK">
    <property type="method" value="EM"/>
    <property type="resolution" value="2.80 A"/>
    <property type="chains" value="i=32-103"/>
</dbReference>
<dbReference type="PDB" id="8B5L">
    <property type="method" value="EM"/>
    <property type="resolution" value="2.86 A"/>
    <property type="chains" value="i=32-105"/>
</dbReference>
<dbReference type="PDB" id="8B6C">
    <property type="method" value="EM"/>
    <property type="resolution" value="2.79 A"/>
    <property type="chains" value="i=32-105"/>
</dbReference>
<dbReference type="PDB" id="8BPO">
    <property type="method" value="EM"/>
    <property type="resolution" value="2.80 A"/>
    <property type="chains" value="h2=32-105"/>
</dbReference>
<dbReference type="PDB" id="8BTK">
    <property type="method" value="EM"/>
    <property type="resolution" value="3.50 A"/>
    <property type="chains" value="Bi=32-105"/>
</dbReference>
<dbReference type="PDB" id="8P2K">
    <property type="method" value="EM"/>
    <property type="resolution" value="2.90 A"/>
    <property type="chains" value="Bi=32-105"/>
</dbReference>
<dbReference type="PDB" id="8RJB">
    <property type="method" value="EM"/>
    <property type="resolution" value="2.69 A"/>
    <property type="chains" value="i=26-99"/>
</dbReference>
<dbReference type="PDB" id="8RJC">
    <property type="method" value="EM"/>
    <property type="resolution" value="2.90 A"/>
    <property type="chains" value="i=26-99"/>
</dbReference>
<dbReference type="PDB" id="8RJD">
    <property type="method" value="EM"/>
    <property type="resolution" value="2.79 A"/>
    <property type="chains" value="i=26-99"/>
</dbReference>
<dbReference type="PDB" id="8SCB">
    <property type="method" value="EM"/>
    <property type="resolution" value="2.50 A"/>
    <property type="chains" value="i=26-99"/>
</dbReference>
<dbReference type="PDB" id="8VFT">
    <property type="method" value="EM"/>
    <property type="resolution" value="3.30 A"/>
    <property type="chains" value="i=1-105"/>
</dbReference>
<dbReference type="PDB" id="9BDL">
    <property type="method" value="EM"/>
    <property type="resolution" value="2.80 A"/>
    <property type="chains" value="AL36=2-103"/>
</dbReference>
<dbReference type="PDB" id="9BDN">
    <property type="method" value="EM"/>
    <property type="resolution" value="3.10 A"/>
    <property type="chains" value="AL36=2-103"/>
</dbReference>
<dbReference type="PDB" id="9BDP">
    <property type="method" value="EM"/>
    <property type="resolution" value="3.70 A"/>
    <property type="chains" value="AL36=2-103"/>
</dbReference>
<dbReference type="PDB" id="9F1B">
    <property type="method" value="EM"/>
    <property type="resolution" value="3.01 A"/>
    <property type="chains" value="Bi=1-105"/>
</dbReference>
<dbReference type="PDB" id="9F1C">
    <property type="method" value="EM"/>
    <property type="resolution" value="3.78 A"/>
    <property type="chains" value="Bi=1-105"/>
</dbReference>
<dbReference type="PDB" id="9F1D">
    <property type="method" value="EM"/>
    <property type="resolution" value="3.26 A"/>
    <property type="chains" value="Bi=1-105"/>
</dbReference>
<dbReference type="PDBsum" id="3JAG"/>
<dbReference type="PDBsum" id="3JAH"/>
<dbReference type="PDBsum" id="3JAI"/>
<dbReference type="PDBsum" id="5LZS"/>
<dbReference type="PDBsum" id="5LZT"/>
<dbReference type="PDBsum" id="5LZU"/>
<dbReference type="PDBsum" id="5LZV"/>
<dbReference type="PDBsum" id="5LZW"/>
<dbReference type="PDBsum" id="5LZX"/>
<dbReference type="PDBsum" id="5LZY"/>
<dbReference type="PDBsum" id="5LZZ"/>
<dbReference type="PDBsum" id="6D90"/>
<dbReference type="PDBsum" id="6D9J"/>
<dbReference type="PDBsum" id="6FTG"/>
<dbReference type="PDBsum" id="6FTI"/>
<dbReference type="PDBsum" id="6FTJ"/>
<dbReference type="PDBsum" id="6HCF"/>
<dbReference type="PDBsum" id="6HCJ"/>
<dbReference type="PDBsum" id="6HCM"/>
<dbReference type="PDBsum" id="6HCQ"/>
<dbReference type="PDBsum" id="6MTB"/>
<dbReference type="PDBsum" id="6MTC"/>
<dbReference type="PDBsum" id="6MTD"/>
<dbReference type="PDBsum" id="6MTE"/>
<dbReference type="PDBsum" id="6P5I"/>
<dbReference type="PDBsum" id="6P5J"/>
<dbReference type="PDBsum" id="6P5K"/>
<dbReference type="PDBsum" id="6P5N"/>
<dbReference type="PDBsum" id="6R5Q"/>
<dbReference type="PDBsum" id="6R6G"/>
<dbReference type="PDBsum" id="6R6P"/>
<dbReference type="PDBsum" id="6R7Q"/>
<dbReference type="PDBsum" id="6SGC"/>
<dbReference type="PDBsum" id="6T59"/>
<dbReference type="PDBsum" id="6ZVK"/>
<dbReference type="PDBsum" id="7A01"/>
<dbReference type="PDBsum" id="7MDZ"/>
<dbReference type="PDBsum" id="7O7Y"/>
<dbReference type="PDBsum" id="7O7Z"/>
<dbReference type="PDBsum" id="7O80"/>
<dbReference type="PDBsum" id="7O81"/>
<dbReference type="PDBsum" id="7OBR"/>
<dbReference type="PDBsum" id="7OYD"/>
<dbReference type="PDBsum" id="7QWQ"/>
<dbReference type="PDBsum" id="7QWR"/>
<dbReference type="PDBsum" id="7QWS"/>
<dbReference type="PDBsum" id="7TM3"/>
<dbReference type="PDBsum" id="7TOQ"/>
<dbReference type="PDBsum" id="7TOR"/>
<dbReference type="PDBsum" id="7TUT"/>
<dbReference type="PDBsum" id="7UCJ"/>
<dbReference type="PDBsum" id="7UCK"/>
<dbReference type="PDBsum" id="8B5L"/>
<dbReference type="PDBsum" id="8B6C"/>
<dbReference type="PDBsum" id="8BPO"/>
<dbReference type="PDBsum" id="8BTK"/>
<dbReference type="PDBsum" id="8P2K"/>
<dbReference type="PDBsum" id="8RJB"/>
<dbReference type="PDBsum" id="8RJC"/>
<dbReference type="PDBsum" id="8RJD"/>
<dbReference type="PDBsum" id="8SCB"/>
<dbReference type="PDBsum" id="8VFT"/>
<dbReference type="PDBsum" id="9BDL"/>
<dbReference type="PDBsum" id="9BDN"/>
<dbReference type="PDBsum" id="9BDP"/>
<dbReference type="PDBsum" id="9F1B"/>
<dbReference type="PDBsum" id="9F1C"/>
<dbReference type="PDBsum" id="9F1D"/>
<dbReference type="EMDB" id="EMD-0099"/>
<dbReference type="EMDB" id="EMD-0100"/>
<dbReference type="EMDB" id="EMD-0192"/>
<dbReference type="EMDB" id="EMD-0194"/>
<dbReference type="EMDB" id="EMD-0195"/>
<dbReference type="EMDB" id="EMD-0197"/>
<dbReference type="EMDB" id="EMD-10181"/>
<dbReference type="EMDB" id="EMD-10380"/>
<dbReference type="EMDB" id="EMD-11459"/>
<dbReference type="EMDB" id="EMD-11590"/>
<dbReference type="EMDB" id="EMD-12303"/>
<dbReference type="EMDB" id="EMD-12756"/>
<dbReference type="EMDB" id="EMD-12757"/>
<dbReference type="EMDB" id="EMD-12758"/>
<dbReference type="EMDB" id="EMD-12759"/>
<dbReference type="EMDB" id="EMD-12801"/>
<dbReference type="EMDB" id="EMD-13114"/>
<dbReference type="EMDB" id="EMD-14191"/>
<dbReference type="EMDB" id="EMD-14192"/>
<dbReference type="EMDB" id="EMD-14193"/>
<dbReference type="EMDB" id="EMD-15860"/>
<dbReference type="EMDB" id="EMD-15863"/>
<dbReference type="EMDB" id="EMD-16155"/>
<dbReference type="EMDB" id="EMD-16232"/>
<dbReference type="EMDB" id="EMD-17367"/>
<dbReference type="EMDB" id="EMD-19195"/>
<dbReference type="EMDB" id="EMD-19197"/>
<dbReference type="EMDB" id="EMD-19198"/>
<dbReference type="EMDB" id="EMD-20255"/>
<dbReference type="EMDB" id="EMD-20256"/>
<dbReference type="EMDB" id="EMD-20257"/>
<dbReference type="EMDB" id="EMD-20258"/>
<dbReference type="EMDB" id="EMD-23785"/>
<dbReference type="EMDB" id="EMD-25994"/>
<dbReference type="EMDB" id="EMD-26035"/>
<dbReference type="EMDB" id="EMD-26036"/>
<dbReference type="EMDB" id="EMD-26133"/>
<dbReference type="EMDB" id="EMD-26444"/>
<dbReference type="EMDB" id="EMD-26445"/>
<dbReference type="EMDB" id="EMD-40344"/>
<dbReference type="EMDB" id="EMD-4130"/>
<dbReference type="EMDB" id="EMD-4131"/>
<dbReference type="EMDB" id="EMD-4132"/>
<dbReference type="EMDB" id="EMD-4133"/>
<dbReference type="EMDB" id="EMD-4134"/>
<dbReference type="EMDB" id="EMD-4135"/>
<dbReference type="EMDB" id="EMD-4136"/>
<dbReference type="EMDB" id="EMD-4137"/>
<dbReference type="EMDB" id="EMD-4300"/>
<dbReference type="EMDB" id="EMD-4315"/>
<dbReference type="EMDB" id="EMD-4316"/>
<dbReference type="EMDB" id="EMD-4317"/>
<dbReference type="EMDB" id="EMD-43189"/>
<dbReference type="EMDB" id="EMD-44461"/>
<dbReference type="EMDB" id="EMD-44463"/>
<dbReference type="EMDB" id="EMD-44464"/>
<dbReference type="EMDB" id="EMD-4729"/>
<dbReference type="EMDB" id="EMD-4735"/>
<dbReference type="EMDB" id="EMD-4737"/>
<dbReference type="EMDB" id="EMD-4745"/>
<dbReference type="EMDB" id="EMD-50124"/>
<dbReference type="EMDB" id="EMD-50125"/>
<dbReference type="EMDB" id="EMD-50126"/>
<dbReference type="EMDB" id="EMD-7834"/>
<dbReference type="EMDB" id="EMD-7836"/>
<dbReference type="EMDB" id="EMD-9237"/>
<dbReference type="EMDB" id="EMD-9239"/>
<dbReference type="EMDB" id="EMD-9240"/>
<dbReference type="EMDB" id="EMD-9242"/>
<dbReference type="SMR" id="G1TTQ5"/>
<dbReference type="IntAct" id="G1TTQ5">
    <property type="interactions" value="1"/>
</dbReference>
<dbReference type="STRING" id="9986.ENSOCUP00000020426"/>
<dbReference type="PaxDb" id="9986-ENSOCUP00000020426"/>
<dbReference type="eggNOG" id="KOG3452">
    <property type="taxonomic scope" value="Eukaryota"/>
</dbReference>
<dbReference type="HOGENOM" id="CLU_140672_2_0_1"/>
<dbReference type="InParanoid" id="G1TTQ5"/>
<dbReference type="TreeFam" id="TF314463"/>
<dbReference type="Proteomes" id="UP000001811">
    <property type="component" value="Chromosome 1"/>
</dbReference>
<dbReference type="Bgee" id="ENSOCUG00000021220">
    <property type="expression patterns" value="Expressed in uterus and 19 other cell types or tissues"/>
</dbReference>
<dbReference type="GO" id="GO:0005829">
    <property type="term" value="C:cytosol"/>
    <property type="evidence" value="ECO:0007669"/>
    <property type="project" value="UniProtKB-SubCell"/>
</dbReference>
<dbReference type="GO" id="GO:1990904">
    <property type="term" value="C:ribonucleoprotein complex"/>
    <property type="evidence" value="ECO:0007669"/>
    <property type="project" value="UniProtKB-KW"/>
</dbReference>
<dbReference type="GO" id="GO:0005840">
    <property type="term" value="C:ribosome"/>
    <property type="evidence" value="ECO:0007669"/>
    <property type="project" value="UniProtKB-KW"/>
</dbReference>
<dbReference type="GO" id="GO:0003735">
    <property type="term" value="F:structural constituent of ribosome"/>
    <property type="evidence" value="ECO:0007669"/>
    <property type="project" value="InterPro"/>
</dbReference>
<dbReference type="GO" id="GO:0006412">
    <property type="term" value="P:translation"/>
    <property type="evidence" value="ECO:0007669"/>
    <property type="project" value="InterPro"/>
</dbReference>
<dbReference type="FunFam" id="1.10.10.1760:FF:000002">
    <property type="entry name" value="60S ribosomal protein L36"/>
    <property type="match status" value="1"/>
</dbReference>
<dbReference type="Gene3D" id="1.10.10.1760">
    <property type="entry name" value="60S ribosomal protein L36"/>
    <property type="match status" value="1"/>
</dbReference>
<dbReference type="InterPro" id="IPR000509">
    <property type="entry name" value="Ribosomal_eL36"/>
</dbReference>
<dbReference type="InterPro" id="IPR038097">
    <property type="entry name" value="Ribosomal_eL36_sf"/>
</dbReference>
<dbReference type="PANTHER" id="PTHR10114">
    <property type="entry name" value="60S RIBOSOMAL PROTEIN L36"/>
    <property type="match status" value="1"/>
</dbReference>
<dbReference type="Pfam" id="PF01158">
    <property type="entry name" value="Ribosomal_L36e"/>
    <property type="match status" value="1"/>
</dbReference>
<dbReference type="PROSITE" id="PS01190">
    <property type="entry name" value="RIBOSOMAL_L36E"/>
    <property type="match status" value="1"/>
</dbReference>
<comment type="function">
    <text evidence="3 4">Component of the large ribosomal subunit (PubMed:26245381, PubMed:27863242). The ribosome is a large ribonucleoprotein complex responsible for the synthesis of proteins in the cell (PubMed:26245381, PubMed:27863242).</text>
</comment>
<comment type="subunit">
    <text evidence="3 4 5 6 7 8 9 10 11 12 13">Component of the large ribosomal subunit.</text>
</comment>
<comment type="subcellular location">
    <subcellularLocation>
        <location evidence="1">Cytoplasm</location>
        <location evidence="1">Cytosol</location>
    </subcellularLocation>
    <subcellularLocation>
        <location evidence="3 4 5 6 7 8 9 10 11 12 13">Cytoplasm</location>
    </subcellularLocation>
    <text evidence="1">Detected on cytosolic polysomes.</text>
</comment>
<comment type="similarity">
    <text evidence="14">Belongs to the eukaryotic ribosomal protein eL36 family.</text>
</comment>
<feature type="initiator methionine" description="Removed" evidence="1">
    <location>
        <position position="1"/>
    </location>
</feature>
<feature type="chain" id="PRO_0000460126" description="Large ribosomal subunit protein eL36">
    <location>
        <begin position="2"/>
        <end position="105"/>
    </location>
</feature>
<feature type="region of interest" description="Disordered" evidence="2">
    <location>
        <begin position="9"/>
        <end position="31"/>
    </location>
</feature>
<feature type="compositionally biased region" description="Basic residues" evidence="2">
    <location>
        <begin position="13"/>
        <end position="31"/>
    </location>
</feature>
<feature type="modified residue" description="N6-acetyllysine" evidence="1">
    <location>
        <position position="62"/>
    </location>
</feature>
<evidence type="ECO:0000250" key="1">
    <source>
        <dbReference type="UniProtKB" id="Q9Y3U8"/>
    </source>
</evidence>
<evidence type="ECO:0000256" key="2">
    <source>
        <dbReference type="SAM" id="MobiDB-lite"/>
    </source>
</evidence>
<evidence type="ECO:0000269" key="3">
    <source>
    </source>
</evidence>
<evidence type="ECO:0000269" key="4">
    <source>
    </source>
</evidence>
<evidence type="ECO:0000269" key="5">
    <source>
    </source>
</evidence>
<evidence type="ECO:0000269" key="6">
    <source>
    </source>
</evidence>
<evidence type="ECO:0000269" key="7">
    <source>
    </source>
</evidence>
<evidence type="ECO:0000269" key="8">
    <source>
    </source>
</evidence>
<evidence type="ECO:0000269" key="9">
    <source>
    </source>
</evidence>
<evidence type="ECO:0000269" key="10">
    <source>
    </source>
</evidence>
<evidence type="ECO:0000269" key="11">
    <source>
    </source>
</evidence>
<evidence type="ECO:0000269" key="12">
    <source>
    </source>
</evidence>
<evidence type="ECO:0000269" key="13">
    <source>
    </source>
</evidence>
<evidence type="ECO:0000305" key="14"/>
<evidence type="ECO:0007744" key="15">
    <source>
        <dbReference type="PDB" id="3JAG"/>
    </source>
</evidence>
<evidence type="ECO:0007744" key="16">
    <source>
        <dbReference type="PDB" id="3JAH"/>
    </source>
</evidence>
<evidence type="ECO:0007744" key="17">
    <source>
        <dbReference type="PDB" id="5LZS"/>
    </source>
</evidence>
<evidence type="ECO:0007744" key="18">
    <source>
        <dbReference type="PDB" id="5LZT"/>
    </source>
</evidence>
<evidence type="ECO:0007744" key="19">
    <source>
        <dbReference type="PDB" id="6D90"/>
    </source>
</evidence>
<evidence type="ECO:0007744" key="20">
    <source>
        <dbReference type="PDB" id="6D9J"/>
    </source>
</evidence>
<evidence type="ECO:0007744" key="21">
    <source>
        <dbReference type="PDB" id="6HCM"/>
    </source>
</evidence>
<evidence type="ECO:0007744" key="22">
    <source>
        <dbReference type="PDB" id="6MTB"/>
    </source>
</evidence>
<evidence type="ECO:0007744" key="23">
    <source>
        <dbReference type="PDB" id="6MTC"/>
    </source>
</evidence>
<evidence type="ECO:0007744" key="24">
    <source>
        <dbReference type="PDB" id="6P5I"/>
    </source>
</evidence>
<evidence type="ECO:0007744" key="25">
    <source>
        <dbReference type="PDB" id="6P5J"/>
    </source>
</evidence>
<evidence type="ECO:0007744" key="26">
    <source>
        <dbReference type="PDB" id="6R5Q"/>
    </source>
</evidence>
<evidence type="ECO:0007744" key="27">
    <source>
        <dbReference type="PDB" id="6R6G"/>
    </source>
</evidence>
<evidence type="ECO:0007744" key="28">
    <source>
        <dbReference type="PDB" id="6SGC"/>
    </source>
</evidence>
<evidence type="ECO:0007744" key="29">
    <source>
        <dbReference type="PDB" id="6ZVK"/>
    </source>
</evidence>
<evidence type="ECO:0007744" key="30">
    <source>
        <dbReference type="PDB" id="7A01"/>
    </source>
</evidence>
<evidence type="ECO:0007744" key="31">
    <source>
        <dbReference type="PDB" id="7OYD"/>
    </source>
</evidence>
<evidence type="ECO:0007744" key="32">
    <source>
        <dbReference type="PDB" id="7UCJ"/>
    </source>
</evidence>
<evidence type="ECO:0007744" key="33">
    <source>
        <dbReference type="PDB" id="7UCK"/>
    </source>
</evidence>